<evidence type="ECO:0000255" key="1">
    <source>
        <dbReference type="HAMAP-Rule" id="MF_00041"/>
    </source>
</evidence>
<organism>
    <name type="scientific">Burkholderia mallei (strain ATCC 23344)</name>
    <dbReference type="NCBI Taxonomy" id="243160"/>
    <lineage>
        <taxon>Bacteria</taxon>
        <taxon>Pseudomonadati</taxon>
        <taxon>Pseudomonadota</taxon>
        <taxon>Betaproteobacteria</taxon>
        <taxon>Burkholderiales</taxon>
        <taxon>Burkholderiaceae</taxon>
        <taxon>Burkholderia</taxon>
        <taxon>pseudomallei group</taxon>
    </lineage>
</organism>
<reference key="1">
    <citation type="journal article" date="2004" name="Proc. Natl. Acad. Sci. U.S.A.">
        <title>Structural flexibility in the Burkholderia mallei genome.</title>
        <authorList>
            <person name="Nierman W.C."/>
            <person name="DeShazer D."/>
            <person name="Kim H.S."/>
            <person name="Tettelin H."/>
            <person name="Nelson K.E."/>
            <person name="Feldblyum T.V."/>
            <person name="Ulrich R.L."/>
            <person name="Ronning C.M."/>
            <person name="Brinkac L.M."/>
            <person name="Daugherty S.C."/>
            <person name="Davidsen T.D."/>
            <person name="DeBoy R.T."/>
            <person name="Dimitrov G."/>
            <person name="Dodson R.J."/>
            <person name="Durkin A.S."/>
            <person name="Gwinn M.L."/>
            <person name="Haft D.H."/>
            <person name="Khouri H.M."/>
            <person name="Kolonay J.F."/>
            <person name="Madupu R."/>
            <person name="Mohammoud Y."/>
            <person name="Nelson W.C."/>
            <person name="Radune D."/>
            <person name="Romero C.M."/>
            <person name="Sarria S."/>
            <person name="Selengut J."/>
            <person name="Shamblin C."/>
            <person name="Sullivan S.A."/>
            <person name="White O."/>
            <person name="Yu Y."/>
            <person name="Zafar N."/>
            <person name="Zhou L."/>
            <person name="Fraser C.M."/>
        </authorList>
    </citation>
    <scope>NUCLEOTIDE SEQUENCE [LARGE SCALE GENOMIC DNA]</scope>
    <source>
        <strain>ATCC 23344</strain>
    </source>
</reference>
<protein>
    <recommendedName>
        <fullName evidence="1">Cysteine--tRNA ligase</fullName>
        <ecNumber evidence="1">6.1.1.16</ecNumber>
    </recommendedName>
    <alternativeName>
        <fullName evidence="1">Cysteinyl-tRNA synthetase</fullName>
        <shortName evidence="1">CysRS</shortName>
    </alternativeName>
</protein>
<accession>Q62J37</accession>
<comment type="catalytic activity">
    <reaction evidence="1">
        <text>tRNA(Cys) + L-cysteine + ATP = L-cysteinyl-tRNA(Cys) + AMP + diphosphate</text>
        <dbReference type="Rhea" id="RHEA:17773"/>
        <dbReference type="Rhea" id="RHEA-COMP:9661"/>
        <dbReference type="Rhea" id="RHEA-COMP:9679"/>
        <dbReference type="ChEBI" id="CHEBI:30616"/>
        <dbReference type="ChEBI" id="CHEBI:33019"/>
        <dbReference type="ChEBI" id="CHEBI:35235"/>
        <dbReference type="ChEBI" id="CHEBI:78442"/>
        <dbReference type="ChEBI" id="CHEBI:78517"/>
        <dbReference type="ChEBI" id="CHEBI:456215"/>
        <dbReference type="EC" id="6.1.1.16"/>
    </reaction>
</comment>
<comment type="cofactor">
    <cofactor evidence="1">
        <name>Zn(2+)</name>
        <dbReference type="ChEBI" id="CHEBI:29105"/>
    </cofactor>
    <text evidence="1">Binds 1 zinc ion per subunit.</text>
</comment>
<comment type="subunit">
    <text evidence="1">Monomer.</text>
</comment>
<comment type="subcellular location">
    <subcellularLocation>
        <location evidence="1">Cytoplasm</location>
    </subcellularLocation>
</comment>
<comment type="similarity">
    <text evidence="1">Belongs to the class-I aminoacyl-tRNA synthetase family.</text>
</comment>
<proteinExistence type="inferred from homology"/>
<dbReference type="EC" id="6.1.1.16" evidence="1"/>
<dbReference type="EMBL" id="CP000010">
    <property type="protein sequence ID" value="AAU47773.1"/>
    <property type="molecule type" value="Genomic_DNA"/>
</dbReference>
<dbReference type="RefSeq" id="WP_004192752.1">
    <property type="nucleotide sequence ID" value="NC_006348.1"/>
</dbReference>
<dbReference type="RefSeq" id="YP_103282.1">
    <property type="nucleotide sequence ID" value="NC_006348.1"/>
</dbReference>
<dbReference type="SMR" id="Q62J37"/>
<dbReference type="GeneID" id="93060794"/>
<dbReference type="KEGG" id="bma:BMA1656"/>
<dbReference type="PATRIC" id="fig|243160.12.peg.1696"/>
<dbReference type="eggNOG" id="COG0215">
    <property type="taxonomic scope" value="Bacteria"/>
</dbReference>
<dbReference type="HOGENOM" id="CLU_013528_0_2_4"/>
<dbReference type="Proteomes" id="UP000006693">
    <property type="component" value="Chromosome 1"/>
</dbReference>
<dbReference type="GO" id="GO:0005829">
    <property type="term" value="C:cytosol"/>
    <property type="evidence" value="ECO:0007669"/>
    <property type="project" value="TreeGrafter"/>
</dbReference>
<dbReference type="GO" id="GO:0005524">
    <property type="term" value="F:ATP binding"/>
    <property type="evidence" value="ECO:0007669"/>
    <property type="project" value="UniProtKB-UniRule"/>
</dbReference>
<dbReference type="GO" id="GO:0004817">
    <property type="term" value="F:cysteine-tRNA ligase activity"/>
    <property type="evidence" value="ECO:0007669"/>
    <property type="project" value="UniProtKB-UniRule"/>
</dbReference>
<dbReference type="GO" id="GO:0008270">
    <property type="term" value="F:zinc ion binding"/>
    <property type="evidence" value="ECO:0007669"/>
    <property type="project" value="UniProtKB-UniRule"/>
</dbReference>
<dbReference type="GO" id="GO:0006423">
    <property type="term" value="P:cysteinyl-tRNA aminoacylation"/>
    <property type="evidence" value="ECO:0007669"/>
    <property type="project" value="UniProtKB-UniRule"/>
</dbReference>
<dbReference type="CDD" id="cd07963">
    <property type="entry name" value="Anticodon_Ia_Cys"/>
    <property type="match status" value="1"/>
</dbReference>
<dbReference type="CDD" id="cd00672">
    <property type="entry name" value="CysRS_core"/>
    <property type="match status" value="1"/>
</dbReference>
<dbReference type="FunFam" id="3.40.50.620:FF:000009">
    <property type="entry name" value="Cysteine--tRNA ligase"/>
    <property type="match status" value="1"/>
</dbReference>
<dbReference type="Gene3D" id="1.20.120.1910">
    <property type="entry name" value="Cysteine-tRNA ligase, C-terminal anti-codon recognition domain"/>
    <property type="match status" value="1"/>
</dbReference>
<dbReference type="Gene3D" id="3.40.50.620">
    <property type="entry name" value="HUPs"/>
    <property type="match status" value="1"/>
</dbReference>
<dbReference type="HAMAP" id="MF_00041">
    <property type="entry name" value="Cys_tRNA_synth"/>
    <property type="match status" value="1"/>
</dbReference>
<dbReference type="InterPro" id="IPR015803">
    <property type="entry name" value="Cys-tRNA-ligase"/>
</dbReference>
<dbReference type="InterPro" id="IPR015273">
    <property type="entry name" value="Cys-tRNA-synt_Ia_DALR"/>
</dbReference>
<dbReference type="InterPro" id="IPR024909">
    <property type="entry name" value="Cys-tRNA/MSH_ligase"/>
</dbReference>
<dbReference type="InterPro" id="IPR056411">
    <property type="entry name" value="CysS_C"/>
</dbReference>
<dbReference type="InterPro" id="IPR014729">
    <property type="entry name" value="Rossmann-like_a/b/a_fold"/>
</dbReference>
<dbReference type="InterPro" id="IPR032678">
    <property type="entry name" value="tRNA-synt_1_cat_dom"/>
</dbReference>
<dbReference type="InterPro" id="IPR009080">
    <property type="entry name" value="tRNAsynth_Ia_anticodon-bd"/>
</dbReference>
<dbReference type="NCBIfam" id="TIGR00435">
    <property type="entry name" value="cysS"/>
    <property type="match status" value="1"/>
</dbReference>
<dbReference type="PANTHER" id="PTHR10890:SF3">
    <property type="entry name" value="CYSTEINE--TRNA LIGASE, CYTOPLASMIC"/>
    <property type="match status" value="1"/>
</dbReference>
<dbReference type="PANTHER" id="PTHR10890">
    <property type="entry name" value="CYSTEINYL-TRNA SYNTHETASE"/>
    <property type="match status" value="1"/>
</dbReference>
<dbReference type="Pfam" id="PF23493">
    <property type="entry name" value="CysS_C"/>
    <property type="match status" value="1"/>
</dbReference>
<dbReference type="Pfam" id="PF09190">
    <property type="entry name" value="DALR_2"/>
    <property type="match status" value="1"/>
</dbReference>
<dbReference type="Pfam" id="PF01406">
    <property type="entry name" value="tRNA-synt_1e"/>
    <property type="match status" value="1"/>
</dbReference>
<dbReference type="PRINTS" id="PR00983">
    <property type="entry name" value="TRNASYNTHCYS"/>
</dbReference>
<dbReference type="SMART" id="SM00840">
    <property type="entry name" value="DALR_2"/>
    <property type="match status" value="1"/>
</dbReference>
<dbReference type="SUPFAM" id="SSF47323">
    <property type="entry name" value="Anticodon-binding domain of a subclass of class I aminoacyl-tRNA synthetases"/>
    <property type="match status" value="1"/>
</dbReference>
<dbReference type="SUPFAM" id="SSF52374">
    <property type="entry name" value="Nucleotidylyl transferase"/>
    <property type="match status" value="1"/>
</dbReference>
<keyword id="KW-0030">Aminoacyl-tRNA synthetase</keyword>
<keyword id="KW-0067">ATP-binding</keyword>
<keyword id="KW-0963">Cytoplasm</keyword>
<keyword id="KW-0436">Ligase</keyword>
<keyword id="KW-0479">Metal-binding</keyword>
<keyword id="KW-0547">Nucleotide-binding</keyword>
<keyword id="KW-0648">Protein biosynthesis</keyword>
<keyword id="KW-1185">Reference proteome</keyword>
<keyword id="KW-0862">Zinc</keyword>
<sequence>MESLRIYNTLARDKQDFVPRQPGEVRMYVCGITVYDYCHIGHARMVVVFDIVQRWLRARGYRVTYVRNITDIDDKIIRRAVENGETIQSLTRRFTDAMNADFDALGVERPDLEPRATEFIPQMLGMIEKLEANGYAYQAKDGDVNYSVRKFANYGRLSGKSLEDLRAGERVAANDAKEDPLDFVLWKRAKPQEPAGASWESKYGAGRPGWHIECSAMGCTLLGAHFDIHGGGQDLQFPHHENEIAQSEGATGQTFVNYWMHNGFVQVDSEKMSKSLGNFFTIREVLEKFDAEVVRFFIVRTHYRSPLNYSDVHLDDARASLTRLYTALKDATPDAQPLDWSEAHAQRFAAAMNDDFNTAVAVAVLFELATEVNRTREPALARQLRLLAGLLGLLGREPREFLQHAAGAARTGALEPHEIEARIAARVAAKQAKNYAEADRIRAELLEAGIALEDKPGGSTEWRRV</sequence>
<name>SYC_BURMA</name>
<feature type="chain" id="PRO_0000159369" description="Cysteine--tRNA ligase">
    <location>
        <begin position="1"/>
        <end position="465"/>
    </location>
</feature>
<feature type="short sequence motif" description="'HIGH' region">
    <location>
        <begin position="32"/>
        <end position="42"/>
    </location>
</feature>
<feature type="short sequence motif" description="'KMSKS' region">
    <location>
        <begin position="271"/>
        <end position="275"/>
    </location>
</feature>
<feature type="binding site" evidence="1">
    <location>
        <position position="30"/>
    </location>
    <ligand>
        <name>Zn(2+)</name>
        <dbReference type="ChEBI" id="CHEBI:29105"/>
    </ligand>
</feature>
<feature type="binding site" evidence="1">
    <location>
        <position position="214"/>
    </location>
    <ligand>
        <name>Zn(2+)</name>
        <dbReference type="ChEBI" id="CHEBI:29105"/>
    </ligand>
</feature>
<feature type="binding site" evidence="1">
    <location>
        <position position="239"/>
    </location>
    <ligand>
        <name>Zn(2+)</name>
        <dbReference type="ChEBI" id="CHEBI:29105"/>
    </ligand>
</feature>
<feature type="binding site" evidence="1">
    <location>
        <position position="243"/>
    </location>
    <ligand>
        <name>Zn(2+)</name>
        <dbReference type="ChEBI" id="CHEBI:29105"/>
    </ligand>
</feature>
<feature type="binding site" evidence="1">
    <location>
        <position position="274"/>
    </location>
    <ligand>
        <name>ATP</name>
        <dbReference type="ChEBI" id="CHEBI:30616"/>
    </ligand>
</feature>
<gene>
    <name evidence="1" type="primary">cysS</name>
    <name type="ordered locus">BMA1656</name>
</gene>